<feature type="chain" id="PRO_1000093276" description="Protein-L-isoaspartate O-methyltransferase">
    <location>
        <begin position="1"/>
        <end position="208"/>
    </location>
</feature>
<feature type="active site" evidence="1">
    <location>
        <position position="59"/>
    </location>
</feature>
<comment type="function">
    <text evidence="1">Catalyzes the methyl esterification of L-isoaspartyl residues in peptides and proteins that result from spontaneous decomposition of normal L-aspartyl and L-asparaginyl residues. It plays a role in the repair and/or degradation of damaged proteins.</text>
</comment>
<comment type="catalytic activity">
    <reaction evidence="1">
        <text>[protein]-L-isoaspartate + S-adenosyl-L-methionine = [protein]-L-isoaspartate alpha-methyl ester + S-adenosyl-L-homocysteine</text>
        <dbReference type="Rhea" id="RHEA:12705"/>
        <dbReference type="Rhea" id="RHEA-COMP:12143"/>
        <dbReference type="Rhea" id="RHEA-COMP:12144"/>
        <dbReference type="ChEBI" id="CHEBI:57856"/>
        <dbReference type="ChEBI" id="CHEBI:59789"/>
        <dbReference type="ChEBI" id="CHEBI:90596"/>
        <dbReference type="ChEBI" id="CHEBI:90598"/>
        <dbReference type="EC" id="2.1.1.77"/>
    </reaction>
</comment>
<comment type="subcellular location">
    <subcellularLocation>
        <location evidence="1">Cytoplasm</location>
    </subcellularLocation>
</comment>
<comment type="similarity">
    <text evidence="1">Belongs to the methyltransferase superfamily. L-isoaspartyl/D-aspartyl protein methyltransferase family.</text>
</comment>
<proteinExistence type="inferred from homology"/>
<keyword id="KW-0963">Cytoplasm</keyword>
<keyword id="KW-0489">Methyltransferase</keyword>
<keyword id="KW-0949">S-adenosyl-L-methionine</keyword>
<keyword id="KW-0808">Transferase</keyword>
<reference key="1">
    <citation type="journal article" date="2011" name="J. Bacteriol.">
        <title>Comparative genomics of 28 Salmonella enterica isolates: evidence for CRISPR-mediated adaptive sublineage evolution.</title>
        <authorList>
            <person name="Fricke W.F."/>
            <person name="Mammel M.K."/>
            <person name="McDermott P.F."/>
            <person name="Tartera C."/>
            <person name="White D.G."/>
            <person name="Leclerc J.E."/>
            <person name="Ravel J."/>
            <person name="Cebula T.A."/>
        </authorList>
    </citation>
    <scope>NUCLEOTIDE SEQUENCE [LARGE SCALE GENOMIC DNA]</scope>
    <source>
        <strain>SL254</strain>
    </source>
</reference>
<protein>
    <recommendedName>
        <fullName evidence="1">Protein-L-isoaspartate O-methyltransferase</fullName>
        <ecNumber evidence="1">2.1.1.77</ecNumber>
    </recommendedName>
    <alternativeName>
        <fullName evidence="1">L-isoaspartyl protein carboxyl methyltransferase</fullName>
    </alternativeName>
    <alternativeName>
        <fullName evidence="1">Protein L-isoaspartyl methyltransferase</fullName>
    </alternativeName>
    <alternativeName>
        <fullName evidence="1">Protein-beta-aspartate methyltransferase</fullName>
        <shortName evidence="1">PIMT</shortName>
    </alternativeName>
</protein>
<gene>
    <name evidence="1" type="primary">pcm</name>
    <name type="ordered locus">SNSL254_A3132</name>
</gene>
<dbReference type="EC" id="2.1.1.77" evidence="1"/>
<dbReference type="EMBL" id="CP001113">
    <property type="protein sequence ID" value="ACF64079.1"/>
    <property type="molecule type" value="Genomic_DNA"/>
</dbReference>
<dbReference type="RefSeq" id="WP_000253545.1">
    <property type="nucleotide sequence ID" value="NZ_CCMR01000001.1"/>
</dbReference>
<dbReference type="SMR" id="B4T453"/>
<dbReference type="KEGG" id="see:SNSL254_A3132"/>
<dbReference type="HOGENOM" id="CLU_055432_2_0_6"/>
<dbReference type="Proteomes" id="UP000008824">
    <property type="component" value="Chromosome"/>
</dbReference>
<dbReference type="GO" id="GO:0005737">
    <property type="term" value="C:cytoplasm"/>
    <property type="evidence" value="ECO:0007669"/>
    <property type="project" value="UniProtKB-SubCell"/>
</dbReference>
<dbReference type="GO" id="GO:0004719">
    <property type="term" value="F:protein-L-isoaspartate (D-aspartate) O-methyltransferase activity"/>
    <property type="evidence" value="ECO:0007669"/>
    <property type="project" value="UniProtKB-UniRule"/>
</dbReference>
<dbReference type="GO" id="GO:0032259">
    <property type="term" value="P:methylation"/>
    <property type="evidence" value="ECO:0007669"/>
    <property type="project" value="UniProtKB-KW"/>
</dbReference>
<dbReference type="GO" id="GO:0036211">
    <property type="term" value="P:protein modification process"/>
    <property type="evidence" value="ECO:0007669"/>
    <property type="project" value="UniProtKB-UniRule"/>
</dbReference>
<dbReference type="GO" id="GO:0030091">
    <property type="term" value="P:protein repair"/>
    <property type="evidence" value="ECO:0007669"/>
    <property type="project" value="UniProtKB-UniRule"/>
</dbReference>
<dbReference type="CDD" id="cd02440">
    <property type="entry name" value="AdoMet_MTases"/>
    <property type="match status" value="1"/>
</dbReference>
<dbReference type="FunFam" id="3.40.50.150:FF:000010">
    <property type="entry name" value="Protein-L-isoaspartate O-methyltransferase"/>
    <property type="match status" value="1"/>
</dbReference>
<dbReference type="Gene3D" id="3.40.50.150">
    <property type="entry name" value="Vaccinia Virus protein VP39"/>
    <property type="match status" value="1"/>
</dbReference>
<dbReference type="HAMAP" id="MF_00090">
    <property type="entry name" value="PIMT"/>
    <property type="match status" value="1"/>
</dbReference>
<dbReference type="InterPro" id="IPR000682">
    <property type="entry name" value="PCMT"/>
</dbReference>
<dbReference type="InterPro" id="IPR029063">
    <property type="entry name" value="SAM-dependent_MTases_sf"/>
</dbReference>
<dbReference type="NCBIfam" id="TIGR00080">
    <property type="entry name" value="pimt"/>
    <property type="match status" value="1"/>
</dbReference>
<dbReference type="NCBIfam" id="NF001453">
    <property type="entry name" value="PRK00312.1"/>
    <property type="match status" value="1"/>
</dbReference>
<dbReference type="PANTHER" id="PTHR11579">
    <property type="entry name" value="PROTEIN-L-ISOASPARTATE O-METHYLTRANSFERASE"/>
    <property type="match status" value="1"/>
</dbReference>
<dbReference type="PANTHER" id="PTHR11579:SF0">
    <property type="entry name" value="PROTEIN-L-ISOASPARTATE(D-ASPARTATE) O-METHYLTRANSFERASE"/>
    <property type="match status" value="1"/>
</dbReference>
<dbReference type="Pfam" id="PF01135">
    <property type="entry name" value="PCMT"/>
    <property type="match status" value="1"/>
</dbReference>
<dbReference type="SUPFAM" id="SSF53335">
    <property type="entry name" value="S-adenosyl-L-methionine-dependent methyltransferases"/>
    <property type="match status" value="1"/>
</dbReference>
<dbReference type="PROSITE" id="PS01279">
    <property type="entry name" value="PCMT"/>
    <property type="match status" value="1"/>
</dbReference>
<accession>B4T453</accession>
<organism>
    <name type="scientific">Salmonella newport (strain SL254)</name>
    <dbReference type="NCBI Taxonomy" id="423368"/>
    <lineage>
        <taxon>Bacteria</taxon>
        <taxon>Pseudomonadati</taxon>
        <taxon>Pseudomonadota</taxon>
        <taxon>Gammaproteobacteria</taxon>
        <taxon>Enterobacterales</taxon>
        <taxon>Enterobacteriaceae</taxon>
        <taxon>Salmonella</taxon>
    </lineage>
</organism>
<evidence type="ECO:0000255" key="1">
    <source>
        <dbReference type="HAMAP-Rule" id="MF_00090"/>
    </source>
</evidence>
<name>PIMT_SALNS</name>
<sequence>MVSGRVQALLEQLRAQGIRDEQVLNALAAVPREKFIDEAFEHKAWENIALPIGQGQTISQPYMVARMTELLELTPQSRVLEIGTGSGYQTAILAHLVHHVCSVERIKGLQWQARRRLKQLDLHNVSTRHGDGWQGWQARAPFDAIIVTAAPPEIPTALMAQLDEGGILVLPVGDEQQFLKRVRRRGGEFIIDTVEAVRFVPLVKGELA</sequence>